<gene>
    <name evidence="1" type="primary">prfC</name>
    <name type="ordered locus">Ent638_0534</name>
</gene>
<dbReference type="EMBL" id="CP000653">
    <property type="protein sequence ID" value="ABP59221.1"/>
    <property type="molecule type" value="Genomic_DNA"/>
</dbReference>
<dbReference type="RefSeq" id="WP_012015944.1">
    <property type="nucleotide sequence ID" value="NC_009436.1"/>
</dbReference>
<dbReference type="SMR" id="A4W691"/>
<dbReference type="STRING" id="399742.Ent638_0534"/>
<dbReference type="KEGG" id="ent:Ent638_0534"/>
<dbReference type="eggNOG" id="COG4108">
    <property type="taxonomic scope" value="Bacteria"/>
</dbReference>
<dbReference type="HOGENOM" id="CLU_002794_2_1_6"/>
<dbReference type="OrthoDB" id="9801472at2"/>
<dbReference type="Proteomes" id="UP000000230">
    <property type="component" value="Chromosome"/>
</dbReference>
<dbReference type="GO" id="GO:0005829">
    <property type="term" value="C:cytosol"/>
    <property type="evidence" value="ECO:0007669"/>
    <property type="project" value="TreeGrafter"/>
</dbReference>
<dbReference type="GO" id="GO:0005525">
    <property type="term" value="F:GTP binding"/>
    <property type="evidence" value="ECO:0007669"/>
    <property type="project" value="UniProtKB-UniRule"/>
</dbReference>
<dbReference type="GO" id="GO:0003924">
    <property type="term" value="F:GTPase activity"/>
    <property type="evidence" value="ECO:0007669"/>
    <property type="project" value="InterPro"/>
</dbReference>
<dbReference type="GO" id="GO:0097216">
    <property type="term" value="F:guanosine tetraphosphate binding"/>
    <property type="evidence" value="ECO:0007669"/>
    <property type="project" value="UniProtKB-ARBA"/>
</dbReference>
<dbReference type="GO" id="GO:0016150">
    <property type="term" value="F:translation release factor activity, codon nonspecific"/>
    <property type="evidence" value="ECO:0007669"/>
    <property type="project" value="TreeGrafter"/>
</dbReference>
<dbReference type="GO" id="GO:0016149">
    <property type="term" value="F:translation release factor activity, codon specific"/>
    <property type="evidence" value="ECO:0007669"/>
    <property type="project" value="UniProtKB-UniRule"/>
</dbReference>
<dbReference type="GO" id="GO:0006449">
    <property type="term" value="P:regulation of translational termination"/>
    <property type="evidence" value="ECO:0007669"/>
    <property type="project" value="UniProtKB-UniRule"/>
</dbReference>
<dbReference type="CDD" id="cd04169">
    <property type="entry name" value="RF3"/>
    <property type="match status" value="1"/>
</dbReference>
<dbReference type="CDD" id="cd03689">
    <property type="entry name" value="RF3_II"/>
    <property type="match status" value="1"/>
</dbReference>
<dbReference type="CDD" id="cd16259">
    <property type="entry name" value="RF3_III"/>
    <property type="match status" value="1"/>
</dbReference>
<dbReference type="FunFam" id="2.40.30.10:FF:000040">
    <property type="entry name" value="Peptide chain release factor 3"/>
    <property type="match status" value="1"/>
</dbReference>
<dbReference type="FunFam" id="3.30.70.3280:FF:000001">
    <property type="entry name" value="Peptide chain release factor 3"/>
    <property type="match status" value="1"/>
</dbReference>
<dbReference type="FunFam" id="3.40.50.300:FF:000184">
    <property type="entry name" value="Peptide chain release factor 3"/>
    <property type="match status" value="1"/>
</dbReference>
<dbReference type="FunFam" id="3.40.50.300:FF:000253">
    <property type="entry name" value="Peptide chain release factor 3"/>
    <property type="match status" value="1"/>
</dbReference>
<dbReference type="Gene3D" id="3.40.50.300">
    <property type="entry name" value="P-loop containing nucleotide triphosphate hydrolases"/>
    <property type="match status" value="3"/>
</dbReference>
<dbReference type="Gene3D" id="3.30.70.3280">
    <property type="entry name" value="Peptide chain release factor 3, domain III"/>
    <property type="match status" value="1"/>
</dbReference>
<dbReference type="HAMAP" id="MF_00072">
    <property type="entry name" value="Rel_fac_3"/>
    <property type="match status" value="1"/>
</dbReference>
<dbReference type="InterPro" id="IPR053905">
    <property type="entry name" value="EF-G-like_DII"/>
</dbReference>
<dbReference type="InterPro" id="IPR035647">
    <property type="entry name" value="EFG_III/V"/>
</dbReference>
<dbReference type="InterPro" id="IPR031157">
    <property type="entry name" value="G_TR_CS"/>
</dbReference>
<dbReference type="InterPro" id="IPR027417">
    <property type="entry name" value="P-loop_NTPase"/>
</dbReference>
<dbReference type="InterPro" id="IPR004548">
    <property type="entry name" value="PrfC"/>
</dbReference>
<dbReference type="InterPro" id="IPR032090">
    <property type="entry name" value="RF3_C"/>
</dbReference>
<dbReference type="InterPro" id="IPR038467">
    <property type="entry name" value="RF3_dom_3_sf"/>
</dbReference>
<dbReference type="InterPro" id="IPR041732">
    <property type="entry name" value="RF3_GTP-bd"/>
</dbReference>
<dbReference type="InterPro" id="IPR005225">
    <property type="entry name" value="Small_GTP-bd"/>
</dbReference>
<dbReference type="InterPro" id="IPR000795">
    <property type="entry name" value="T_Tr_GTP-bd_dom"/>
</dbReference>
<dbReference type="InterPro" id="IPR009000">
    <property type="entry name" value="Transl_B-barrel_sf"/>
</dbReference>
<dbReference type="NCBIfam" id="TIGR00503">
    <property type="entry name" value="prfC"/>
    <property type="match status" value="1"/>
</dbReference>
<dbReference type="NCBIfam" id="NF001964">
    <property type="entry name" value="PRK00741.1"/>
    <property type="match status" value="1"/>
</dbReference>
<dbReference type="NCBIfam" id="TIGR00231">
    <property type="entry name" value="small_GTP"/>
    <property type="match status" value="1"/>
</dbReference>
<dbReference type="PANTHER" id="PTHR43556">
    <property type="entry name" value="PEPTIDE CHAIN RELEASE FACTOR RF3"/>
    <property type="match status" value="1"/>
</dbReference>
<dbReference type="PANTHER" id="PTHR43556:SF2">
    <property type="entry name" value="PEPTIDE CHAIN RELEASE FACTOR RF3"/>
    <property type="match status" value="1"/>
</dbReference>
<dbReference type="Pfam" id="PF22042">
    <property type="entry name" value="EF-G_D2"/>
    <property type="match status" value="1"/>
</dbReference>
<dbReference type="Pfam" id="PF00009">
    <property type="entry name" value="GTP_EFTU"/>
    <property type="match status" value="1"/>
</dbReference>
<dbReference type="Pfam" id="PF16658">
    <property type="entry name" value="RF3_C"/>
    <property type="match status" value="1"/>
</dbReference>
<dbReference type="PRINTS" id="PR00315">
    <property type="entry name" value="ELONGATNFCT"/>
</dbReference>
<dbReference type="SUPFAM" id="SSF54980">
    <property type="entry name" value="EF-G C-terminal domain-like"/>
    <property type="match status" value="1"/>
</dbReference>
<dbReference type="SUPFAM" id="SSF52540">
    <property type="entry name" value="P-loop containing nucleoside triphosphate hydrolases"/>
    <property type="match status" value="1"/>
</dbReference>
<dbReference type="SUPFAM" id="SSF50447">
    <property type="entry name" value="Translation proteins"/>
    <property type="match status" value="1"/>
</dbReference>
<dbReference type="PROSITE" id="PS00301">
    <property type="entry name" value="G_TR_1"/>
    <property type="match status" value="1"/>
</dbReference>
<dbReference type="PROSITE" id="PS51722">
    <property type="entry name" value="G_TR_2"/>
    <property type="match status" value="1"/>
</dbReference>
<evidence type="ECO:0000255" key="1">
    <source>
        <dbReference type="HAMAP-Rule" id="MF_00072"/>
    </source>
</evidence>
<proteinExistence type="inferred from homology"/>
<accession>A4W691</accession>
<reference key="1">
    <citation type="journal article" date="2010" name="PLoS Genet.">
        <title>Genome sequence of the plant growth promoting endophytic bacterium Enterobacter sp. 638.</title>
        <authorList>
            <person name="Taghavi S."/>
            <person name="van der Lelie D."/>
            <person name="Hoffman A."/>
            <person name="Zhang Y.B."/>
            <person name="Walla M.D."/>
            <person name="Vangronsveld J."/>
            <person name="Newman L."/>
            <person name="Monchy S."/>
        </authorList>
    </citation>
    <scope>NUCLEOTIDE SEQUENCE [LARGE SCALE GENOMIC DNA]</scope>
    <source>
        <strain>638</strain>
    </source>
</reference>
<protein>
    <recommendedName>
        <fullName evidence="1">Peptide chain release factor 3</fullName>
        <shortName evidence="1">RF-3</shortName>
    </recommendedName>
</protein>
<feature type="chain" id="PRO_1000057483" description="Peptide chain release factor 3">
    <location>
        <begin position="1"/>
        <end position="529"/>
    </location>
</feature>
<feature type="domain" description="tr-type G">
    <location>
        <begin position="11"/>
        <end position="280"/>
    </location>
</feature>
<feature type="binding site" evidence="1">
    <location>
        <begin position="20"/>
        <end position="27"/>
    </location>
    <ligand>
        <name>GTP</name>
        <dbReference type="ChEBI" id="CHEBI:37565"/>
    </ligand>
</feature>
<feature type="binding site" evidence="1">
    <location>
        <begin position="88"/>
        <end position="92"/>
    </location>
    <ligand>
        <name>GTP</name>
        <dbReference type="ChEBI" id="CHEBI:37565"/>
    </ligand>
</feature>
<feature type="binding site" evidence="1">
    <location>
        <begin position="142"/>
        <end position="145"/>
    </location>
    <ligand>
        <name>GTP</name>
        <dbReference type="ChEBI" id="CHEBI:37565"/>
    </ligand>
</feature>
<comment type="function">
    <text evidence="1">Increases the formation of ribosomal termination complexes and stimulates activities of RF-1 and RF-2. It binds guanine nucleotides and has strong preference for UGA stop codons. It may interact directly with the ribosome. The stimulation of RF-1 and RF-2 is significantly reduced by GTP and GDP, but not by GMP.</text>
</comment>
<comment type="subcellular location">
    <subcellularLocation>
        <location evidence="1">Cytoplasm</location>
    </subcellularLocation>
</comment>
<comment type="similarity">
    <text evidence="1">Belongs to the TRAFAC class translation factor GTPase superfamily. Classic translation factor GTPase family. PrfC subfamily.</text>
</comment>
<keyword id="KW-0963">Cytoplasm</keyword>
<keyword id="KW-0342">GTP-binding</keyword>
<keyword id="KW-0547">Nucleotide-binding</keyword>
<keyword id="KW-0648">Protein biosynthesis</keyword>
<organism>
    <name type="scientific">Enterobacter sp. (strain 638)</name>
    <dbReference type="NCBI Taxonomy" id="399742"/>
    <lineage>
        <taxon>Bacteria</taxon>
        <taxon>Pseudomonadati</taxon>
        <taxon>Pseudomonadota</taxon>
        <taxon>Gammaproteobacteria</taxon>
        <taxon>Enterobacterales</taxon>
        <taxon>Enterobacteriaceae</taxon>
        <taxon>Enterobacter</taxon>
    </lineage>
</organism>
<name>RF3_ENT38</name>
<sequence length="529" mass="59932">MTLSPYLQEVAKRRTFAIISHPDAGKTTITEKVLLFGQAIQTAGTVKGRGSSQHAKSDWMEMEKQRGISITTSVMQFPYHDCLVNLLDTPGHEDFSEDTYRTLTAVDCCLMVIDAAKGVEDRTRKLMEVTRLRDTPILTFMNKLDRDIRDPMEVMDEVERELKIACAPITWPIGCGKLFKGVYHLYKDEVYLYQTGKGHTIQEVRIVKGLDNPELETAVGEELAVQLRDELELVKGASHEFDHELFLAGEITPVFFGTALGNFGVDHMLDGLIEWAPQPMPRKTDTRLVEASEEKFTGFVFKIQANMDPKHRDRVAFLRVVSGQYEKGMKLRQVRIGKDVVISDALTFMAGDRSHVEEAYPGDIIGLHNHGTIQIGDTFTQGEMMKFTGIPNFAPELFRRIRLRDPLKQKQLLKGLVQLSEEGAVQVFRPISNNDLIVGAVGVLQFDVVVARLKSEYNVEAIYESVNVATARWVECSDVKKFEEFKRKNEIQLALDGGDNLTYIAPTMVNLNLTQERYPDVQFRKTREH</sequence>